<gene>
    <name evidence="1" type="primary">ccsA</name>
    <name type="ordered locus">AtCg01040</name>
</gene>
<comment type="function">
    <text evidence="1">Required during biogenesis of c-type cytochromes (cytochrome c6 and cytochrome f) at the step of heme attachment.</text>
</comment>
<comment type="subunit">
    <text evidence="1">May interact with Ccs1.</text>
</comment>
<comment type="subcellular location">
    <subcellularLocation>
        <location evidence="1">Plastid</location>
        <location evidence="1">Chloroplast thylakoid membrane</location>
        <topology evidence="1">Multi-pass membrane protein</topology>
    </subcellularLocation>
</comment>
<comment type="similarity">
    <text evidence="1">Belongs to the CcmF/CycK/Ccl1/NrfE/CcsA family.</text>
</comment>
<geneLocation type="chloroplast"/>
<protein>
    <recommendedName>
        <fullName evidence="1">Cytochrome c biogenesis protein CcsA</fullName>
    </recommendedName>
</protein>
<name>CCSA_ARATH</name>
<reference key="1">
    <citation type="journal article" date="1999" name="DNA Res.">
        <title>Complete structure of the chloroplast genome of Arabidopsis thaliana.</title>
        <authorList>
            <person name="Sato S."/>
            <person name="Nakamura Y."/>
            <person name="Kaneko T."/>
            <person name="Asamizu E."/>
            <person name="Tabata S."/>
        </authorList>
    </citation>
    <scope>NUCLEOTIDE SEQUENCE [LARGE SCALE GENOMIC DNA]</scope>
    <source>
        <strain>cv. Columbia</strain>
    </source>
</reference>
<sequence length="328" mass="37732">MIFSILEHILTHISFSVVSIVLTIYFLTLLVNLDEIIGFFDSSDKGIIITFFGITGLLLTRWIYSGHFPLSNLYESLIFLSWAFSIIHMVSYFNKKQQNKLNTITAPSVIFIQGFATSGLLNKMPQSAILVPALQSQWLMMHVSMMILGYGALLCGSLLSIALLVITFRKVGPTFWKKNIKKNFLLNELFSFDVLYYINERNSILLQQNINFSFSRNYYRYQLIQQLDFWSFRIISLGFIFLTVGILSGAVWANETWGSYWNWDPKETWAFITWTIFAIYLHIKTNRNVRGINSAIVALIGFILIWICYFGVNLLGIGLHSYGSFTSN</sequence>
<dbReference type="EMBL" id="AP000423">
    <property type="protein sequence ID" value="BAA84436.1"/>
    <property type="molecule type" value="Genomic_DNA"/>
</dbReference>
<dbReference type="RefSeq" id="NP_051108.1">
    <property type="nucleotide sequence ID" value="NC_000932.1"/>
</dbReference>
<dbReference type="SMR" id="P56770"/>
<dbReference type="FunCoup" id="P56770">
    <property type="interactions" value="16"/>
</dbReference>
<dbReference type="STRING" id="3702.P56770"/>
<dbReference type="PaxDb" id="3702-ATCG01040.1"/>
<dbReference type="ProteomicsDB" id="224446"/>
<dbReference type="EnsemblPlants" id="ATCG01040.1">
    <property type="protein sequence ID" value="ATCG01040.1"/>
    <property type="gene ID" value="ATCG01040"/>
</dbReference>
<dbReference type="GeneID" id="844769"/>
<dbReference type="Gramene" id="ATCG01040.1">
    <property type="protein sequence ID" value="ATCG01040.1"/>
    <property type="gene ID" value="ATCG01040"/>
</dbReference>
<dbReference type="KEGG" id="ath:ArthCp073"/>
<dbReference type="Araport" id="ATCG01040"/>
<dbReference type="TAIR" id="ATCG01040">
    <property type="gene designation" value="YCF5"/>
</dbReference>
<dbReference type="eggNOG" id="ENOG502QU0T">
    <property type="taxonomic scope" value="Eukaryota"/>
</dbReference>
<dbReference type="HOGENOM" id="CLU_049710_2_4_1"/>
<dbReference type="InParanoid" id="P56770"/>
<dbReference type="OMA" id="YESLCFL"/>
<dbReference type="PRO" id="PR:P56770"/>
<dbReference type="Proteomes" id="UP000006548">
    <property type="component" value="Chloroplast Pltd"/>
</dbReference>
<dbReference type="ExpressionAtlas" id="P56770">
    <property type="expression patterns" value="baseline and differential"/>
</dbReference>
<dbReference type="GO" id="GO:0009535">
    <property type="term" value="C:chloroplast thylakoid membrane"/>
    <property type="evidence" value="ECO:0007669"/>
    <property type="project" value="UniProtKB-SubCell"/>
</dbReference>
<dbReference type="GO" id="GO:0020037">
    <property type="term" value="F:heme binding"/>
    <property type="evidence" value="ECO:0007669"/>
    <property type="project" value="InterPro"/>
</dbReference>
<dbReference type="GO" id="GO:0017004">
    <property type="term" value="P:cytochrome complex assembly"/>
    <property type="evidence" value="ECO:0007669"/>
    <property type="project" value="UniProtKB-UniRule"/>
</dbReference>
<dbReference type="HAMAP" id="MF_01391">
    <property type="entry name" value="CytC_CcsA"/>
    <property type="match status" value="1"/>
</dbReference>
<dbReference type="InterPro" id="IPR002541">
    <property type="entry name" value="Cyt_c_assembly"/>
</dbReference>
<dbReference type="InterPro" id="IPR017562">
    <property type="entry name" value="Cyt_c_biogenesis_CcsA"/>
</dbReference>
<dbReference type="InterPro" id="IPR045062">
    <property type="entry name" value="Cyt_c_biogenesis_CcsA/CcmC"/>
</dbReference>
<dbReference type="NCBIfam" id="TIGR03144">
    <property type="entry name" value="cytochr_II_ccsB"/>
    <property type="match status" value="1"/>
</dbReference>
<dbReference type="PANTHER" id="PTHR30071:SF1">
    <property type="entry name" value="CYTOCHROME B_B6 PROTEIN-RELATED"/>
    <property type="match status" value="1"/>
</dbReference>
<dbReference type="PANTHER" id="PTHR30071">
    <property type="entry name" value="HEME EXPORTER PROTEIN C"/>
    <property type="match status" value="1"/>
</dbReference>
<dbReference type="Pfam" id="PF01578">
    <property type="entry name" value="Cytochrom_C_asm"/>
    <property type="match status" value="1"/>
</dbReference>
<accession>P56770</accession>
<evidence type="ECO:0000255" key="1">
    <source>
        <dbReference type="HAMAP-Rule" id="MF_01391"/>
    </source>
</evidence>
<feature type="chain" id="PRO_0000201598" description="Cytochrome c biogenesis protein CcsA">
    <location>
        <begin position="1"/>
        <end position="328"/>
    </location>
</feature>
<feature type="transmembrane region" description="Helical" evidence="1">
    <location>
        <begin position="13"/>
        <end position="33"/>
    </location>
</feature>
<feature type="transmembrane region" description="Helical" evidence="1">
    <location>
        <begin position="46"/>
        <end position="66"/>
    </location>
</feature>
<feature type="transmembrane region" description="Helical" evidence="1">
    <location>
        <begin position="73"/>
        <end position="93"/>
    </location>
</feature>
<feature type="transmembrane region" description="Helical" evidence="1">
    <location>
        <begin position="101"/>
        <end position="121"/>
    </location>
</feature>
<feature type="transmembrane region" description="Helical" evidence="1">
    <location>
        <begin position="146"/>
        <end position="166"/>
    </location>
</feature>
<feature type="transmembrane region" description="Helical" evidence="1">
    <location>
        <begin position="234"/>
        <end position="254"/>
    </location>
</feature>
<feature type="transmembrane region" description="Helical" evidence="1">
    <location>
        <begin position="263"/>
        <end position="283"/>
    </location>
</feature>
<feature type="transmembrane region" description="Helical" evidence="1">
    <location>
        <begin position="295"/>
        <end position="315"/>
    </location>
</feature>
<keyword id="KW-0150">Chloroplast</keyword>
<keyword id="KW-0201">Cytochrome c-type biogenesis</keyword>
<keyword id="KW-0472">Membrane</keyword>
<keyword id="KW-0934">Plastid</keyword>
<keyword id="KW-1185">Reference proteome</keyword>
<keyword id="KW-0793">Thylakoid</keyword>
<keyword id="KW-0812">Transmembrane</keyword>
<keyword id="KW-1133">Transmembrane helix</keyword>
<proteinExistence type="inferred from homology"/>
<organism>
    <name type="scientific">Arabidopsis thaliana</name>
    <name type="common">Mouse-ear cress</name>
    <dbReference type="NCBI Taxonomy" id="3702"/>
    <lineage>
        <taxon>Eukaryota</taxon>
        <taxon>Viridiplantae</taxon>
        <taxon>Streptophyta</taxon>
        <taxon>Embryophyta</taxon>
        <taxon>Tracheophyta</taxon>
        <taxon>Spermatophyta</taxon>
        <taxon>Magnoliopsida</taxon>
        <taxon>eudicotyledons</taxon>
        <taxon>Gunneridae</taxon>
        <taxon>Pentapetalae</taxon>
        <taxon>rosids</taxon>
        <taxon>malvids</taxon>
        <taxon>Brassicales</taxon>
        <taxon>Brassicaceae</taxon>
        <taxon>Camelineae</taxon>
        <taxon>Arabidopsis</taxon>
    </lineage>
</organism>